<keyword id="KW-0002">3D-structure</keyword>
<keyword id="KW-0963">Cytoplasm</keyword>
<keyword id="KW-0256">Endoplasmic reticulum</keyword>
<keyword id="KW-0472">Membrane</keyword>
<keyword id="KW-0539">Nucleus</keyword>
<keyword id="KW-1267">Proteomics identification</keyword>
<keyword id="KW-1185">Reference proteome</keyword>
<reference key="1">
    <citation type="journal article" date="2004" name="Nat. Genet.">
        <title>Complete sequencing and characterization of 21,243 full-length human cDNAs.</title>
        <authorList>
            <person name="Ota T."/>
            <person name="Suzuki Y."/>
            <person name="Nishikawa T."/>
            <person name="Otsuki T."/>
            <person name="Sugiyama T."/>
            <person name="Irie R."/>
            <person name="Wakamatsu A."/>
            <person name="Hayashi K."/>
            <person name="Sato H."/>
            <person name="Nagai K."/>
            <person name="Kimura K."/>
            <person name="Makita H."/>
            <person name="Sekine M."/>
            <person name="Obayashi M."/>
            <person name="Nishi T."/>
            <person name="Shibahara T."/>
            <person name="Tanaka T."/>
            <person name="Ishii S."/>
            <person name="Yamamoto J."/>
            <person name="Saito K."/>
            <person name="Kawai Y."/>
            <person name="Isono Y."/>
            <person name="Nakamura Y."/>
            <person name="Nagahari K."/>
            <person name="Murakami K."/>
            <person name="Yasuda T."/>
            <person name="Iwayanagi T."/>
            <person name="Wagatsuma M."/>
            <person name="Shiratori A."/>
            <person name="Sudo H."/>
            <person name="Hosoiri T."/>
            <person name="Kaku Y."/>
            <person name="Kodaira H."/>
            <person name="Kondo H."/>
            <person name="Sugawara M."/>
            <person name="Takahashi M."/>
            <person name="Kanda K."/>
            <person name="Yokoi T."/>
            <person name="Furuya T."/>
            <person name="Kikkawa E."/>
            <person name="Omura Y."/>
            <person name="Abe K."/>
            <person name="Kamihara K."/>
            <person name="Katsuta N."/>
            <person name="Sato K."/>
            <person name="Tanikawa M."/>
            <person name="Yamazaki M."/>
            <person name="Ninomiya K."/>
            <person name="Ishibashi T."/>
            <person name="Yamashita H."/>
            <person name="Murakawa K."/>
            <person name="Fujimori K."/>
            <person name="Tanai H."/>
            <person name="Kimata M."/>
            <person name="Watanabe M."/>
            <person name="Hiraoka S."/>
            <person name="Chiba Y."/>
            <person name="Ishida S."/>
            <person name="Ono Y."/>
            <person name="Takiguchi S."/>
            <person name="Watanabe S."/>
            <person name="Yosida M."/>
            <person name="Hotuta T."/>
            <person name="Kusano J."/>
            <person name="Kanehori K."/>
            <person name="Takahashi-Fujii A."/>
            <person name="Hara H."/>
            <person name="Tanase T.-O."/>
            <person name="Nomura Y."/>
            <person name="Togiya S."/>
            <person name="Komai F."/>
            <person name="Hara R."/>
            <person name="Takeuchi K."/>
            <person name="Arita M."/>
            <person name="Imose N."/>
            <person name="Musashino K."/>
            <person name="Yuuki H."/>
            <person name="Oshima A."/>
            <person name="Sasaki N."/>
            <person name="Aotsuka S."/>
            <person name="Yoshikawa Y."/>
            <person name="Matsunawa H."/>
            <person name="Ichihara T."/>
            <person name="Shiohata N."/>
            <person name="Sano S."/>
            <person name="Moriya S."/>
            <person name="Momiyama H."/>
            <person name="Satoh N."/>
            <person name="Takami S."/>
            <person name="Terashima Y."/>
            <person name="Suzuki O."/>
            <person name="Nakagawa S."/>
            <person name="Senoh A."/>
            <person name="Mizoguchi H."/>
            <person name="Goto Y."/>
            <person name="Shimizu F."/>
            <person name="Wakebe H."/>
            <person name="Hishigaki H."/>
            <person name="Watanabe T."/>
            <person name="Sugiyama A."/>
            <person name="Takemoto M."/>
            <person name="Kawakami B."/>
            <person name="Yamazaki M."/>
            <person name="Watanabe K."/>
            <person name="Kumagai A."/>
            <person name="Itakura S."/>
            <person name="Fukuzumi Y."/>
            <person name="Fujimori Y."/>
            <person name="Komiyama M."/>
            <person name="Tashiro H."/>
            <person name="Tanigami A."/>
            <person name="Fujiwara T."/>
            <person name="Ono T."/>
            <person name="Yamada K."/>
            <person name="Fujii Y."/>
            <person name="Ozaki K."/>
            <person name="Hirao M."/>
            <person name="Ohmori Y."/>
            <person name="Kawabata A."/>
            <person name="Hikiji T."/>
            <person name="Kobatake N."/>
            <person name="Inagaki H."/>
            <person name="Ikema Y."/>
            <person name="Okamoto S."/>
            <person name="Okitani R."/>
            <person name="Kawakami T."/>
            <person name="Noguchi S."/>
            <person name="Itoh T."/>
            <person name="Shigeta K."/>
            <person name="Senba T."/>
            <person name="Matsumura K."/>
            <person name="Nakajima Y."/>
            <person name="Mizuno T."/>
            <person name="Morinaga M."/>
            <person name="Sasaki M."/>
            <person name="Togashi T."/>
            <person name="Oyama M."/>
            <person name="Hata H."/>
            <person name="Watanabe M."/>
            <person name="Komatsu T."/>
            <person name="Mizushima-Sugano J."/>
            <person name="Satoh T."/>
            <person name="Shirai Y."/>
            <person name="Takahashi Y."/>
            <person name="Nakagawa K."/>
            <person name="Okumura K."/>
            <person name="Nagase T."/>
            <person name="Nomura N."/>
            <person name="Kikuchi H."/>
            <person name="Masuho Y."/>
            <person name="Yamashita R."/>
            <person name="Nakai K."/>
            <person name="Yada T."/>
            <person name="Nakamura Y."/>
            <person name="Ohara O."/>
            <person name="Isogai T."/>
            <person name="Sugano S."/>
        </authorList>
    </citation>
    <scope>NUCLEOTIDE SEQUENCE [LARGE SCALE MRNA]</scope>
    <source>
        <tissue>Placenta</tissue>
    </source>
</reference>
<reference key="2">
    <citation type="submission" date="2005-04" db="EMBL/GenBank/DDBJ databases">
        <authorList>
            <person name="Suzuki Y."/>
            <person name="Sugano S."/>
            <person name="Totoki Y."/>
            <person name="Toyoda A."/>
            <person name="Takeda T."/>
            <person name="Sakaki Y."/>
            <person name="Tanaka A."/>
            <person name="Yokoyama S."/>
        </authorList>
    </citation>
    <scope>NUCLEOTIDE SEQUENCE [LARGE SCALE MRNA]</scope>
    <source>
        <tissue>Colon</tissue>
    </source>
</reference>
<reference key="3">
    <citation type="journal article" date="2004" name="Genome Res.">
        <title>The status, quality, and expansion of the NIH full-length cDNA project: the Mammalian Gene Collection (MGC).</title>
        <authorList>
            <consortium name="The MGC Project Team"/>
        </authorList>
    </citation>
    <scope>NUCLEOTIDE SEQUENCE [LARGE SCALE MRNA]</scope>
    <source>
        <tissue>Eye</tissue>
    </source>
</reference>
<reference key="4">
    <citation type="journal article" date="2007" name="BMC Genomics">
        <title>The full-ORF clone resource of the German cDNA consortium.</title>
        <authorList>
            <person name="Bechtel S."/>
            <person name="Rosenfelder H."/>
            <person name="Duda A."/>
            <person name="Schmidt C.P."/>
            <person name="Ernst U."/>
            <person name="Wellenreuther R."/>
            <person name="Mehrle A."/>
            <person name="Schuster C."/>
            <person name="Bahr A."/>
            <person name="Bloecker H."/>
            <person name="Heubner D."/>
            <person name="Hoerlein A."/>
            <person name="Michel G."/>
            <person name="Wedler H."/>
            <person name="Koehrer K."/>
            <person name="Ottenwaelder B."/>
            <person name="Poustka A."/>
            <person name="Wiemann S."/>
            <person name="Schupp I."/>
        </authorList>
    </citation>
    <scope>NUCLEOTIDE SEQUENCE [LARGE SCALE MRNA] OF 239-356</scope>
    <source>
        <tissue>Lymph node</tissue>
    </source>
</reference>
<reference key="5">
    <citation type="journal article" date="2013" name="Nature">
        <title>The linear ubiquitin-specific deubiquitinase gumby regulates angiogenesis.</title>
        <authorList>
            <person name="Rivkin E."/>
            <person name="Almeida S.M."/>
            <person name="Ceccarelli D.F."/>
            <person name="Juang Y.C."/>
            <person name="Maclean T.A."/>
            <person name="Srikumar T."/>
            <person name="Huang H."/>
            <person name="Dunham W.H."/>
            <person name="Fukumura R."/>
            <person name="Xie G."/>
            <person name="Gondo Y."/>
            <person name="Raught B."/>
            <person name="Gingras A.C."/>
            <person name="Sicheri F."/>
            <person name="Cordes S.P."/>
        </authorList>
    </citation>
    <scope>LACK OF ACTIVITY</scope>
</reference>
<reference key="6">
    <citation type="journal article" date="2019" name="Structure">
        <title>FAM105A/OTULINL Is a Pseudodeubiquitinase of the OTU-Class that Localizes to the ER Membrane.</title>
        <authorList>
            <person name="Ceccarelli D.F."/>
            <person name="Ivantsiv S."/>
            <person name="Mullin A.A."/>
            <person name="Coyaud E."/>
            <person name="Manczyk N."/>
            <person name="Maisonneuve P."/>
            <person name="Kurinov I."/>
            <person name="Zhao L."/>
            <person name="Go C."/>
            <person name="Gingras A.C."/>
            <person name="Raught B."/>
            <person name="Cordes S."/>
            <person name="Sicheri F."/>
        </authorList>
    </citation>
    <scope>X-RAY CRYSTALLOGRAPHY (2.06 ANGSTROMS) OF 87-356</scope>
    <scope>FUNCTION</scope>
    <scope>SUBCELLULAR LOCATION</scope>
    <scope>SUBUNIT</scope>
    <scope>LACK OF ACTIVITY</scope>
    <scope>DOMAIN</scope>
    <scope>MUTAGENESIS OF 2-ALA--LYS-83; ASP-139 AND HIS-352</scope>
</reference>
<name>OTULL_HUMAN</name>
<evidence type="ECO:0000255" key="1">
    <source>
        <dbReference type="PROSITE-ProRule" id="PRU00139"/>
    </source>
</evidence>
<evidence type="ECO:0000256" key="2">
    <source>
        <dbReference type="SAM" id="MobiDB-lite"/>
    </source>
</evidence>
<evidence type="ECO:0000269" key="3">
    <source>
    </source>
</evidence>
<evidence type="ECO:0000303" key="4">
    <source>
    </source>
</evidence>
<evidence type="ECO:0000305" key="5"/>
<evidence type="ECO:0000305" key="6">
    <source>
    </source>
</evidence>
<evidence type="ECO:0000312" key="7">
    <source>
        <dbReference type="HGNC" id="HGNC:25629"/>
    </source>
</evidence>
<evidence type="ECO:0007829" key="8">
    <source>
        <dbReference type="PDB" id="6DRM"/>
    </source>
</evidence>
<dbReference type="EMBL" id="AK001989">
    <property type="protein sequence ID" value="BAA92023.1"/>
    <property type="molecule type" value="mRNA"/>
</dbReference>
<dbReference type="EMBL" id="AK222731">
    <property type="protein sequence ID" value="BAD96451.1"/>
    <property type="molecule type" value="mRNA"/>
</dbReference>
<dbReference type="EMBL" id="BC011524">
    <property type="protein sequence ID" value="AAH11524.1"/>
    <property type="molecule type" value="mRNA"/>
</dbReference>
<dbReference type="EMBL" id="AL512750">
    <property type="protein sequence ID" value="CAC21673.1"/>
    <property type="molecule type" value="mRNA"/>
</dbReference>
<dbReference type="CCDS" id="CCDS3884.1"/>
<dbReference type="RefSeq" id="NP_061891.1">
    <property type="nucleotide sequence ID" value="NM_019018.3"/>
</dbReference>
<dbReference type="PDB" id="6DRM">
    <property type="method" value="X-ray"/>
    <property type="resolution" value="2.06 A"/>
    <property type="chains" value="A=87-356"/>
</dbReference>
<dbReference type="PDBsum" id="6DRM"/>
<dbReference type="SMR" id="Q9NUU6"/>
<dbReference type="BioGRID" id="119988">
    <property type="interactions" value="409"/>
</dbReference>
<dbReference type="FunCoup" id="Q9NUU6">
    <property type="interactions" value="269"/>
</dbReference>
<dbReference type="IntAct" id="Q9NUU6">
    <property type="interactions" value="13"/>
</dbReference>
<dbReference type="STRING" id="9606.ENSP00000274217"/>
<dbReference type="GlyGen" id="Q9NUU6">
    <property type="glycosylation" value="1 site, 1 O-linked glycan (1 site)"/>
</dbReference>
<dbReference type="iPTMnet" id="Q9NUU6"/>
<dbReference type="PhosphoSitePlus" id="Q9NUU6"/>
<dbReference type="BioMuta" id="FAM105A"/>
<dbReference type="DMDM" id="74734394"/>
<dbReference type="jPOST" id="Q9NUU6"/>
<dbReference type="MassIVE" id="Q9NUU6"/>
<dbReference type="PaxDb" id="9606-ENSP00000274217"/>
<dbReference type="PeptideAtlas" id="Q9NUU6"/>
<dbReference type="ProteomicsDB" id="82720"/>
<dbReference type="Pumba" id="Q9NUU6"/>
<dbReference type="Antibodypedia" id="22546">
    <property type="antibodies" value="123 antibodies from 21 providers"/>
</dbReference>
<dbReference type="DNASU" id="54491"/>
<dbReference type="Ensembl" id="ENST00000274217.4">
    <property type="protein sequence ID" value="ENSP00000274217.3"/>
    <property type="gene ID" value="ENSG00000145569.6"/>
</dbReference>
<dbReference type="GeneID" id="54491"/>
<dbReference type="KEGG" id="hsa:54491"/>
<dbReference type="MANE-Select" id="ENST00000274217.4">
    <property type="protein sequence ID" value="ENSP00000274217.3"/>
    <property type="RefSeq nucleotide sequence ID" value="NM_019018.3"/>
    <property type="RefSeq protein sequence ID" value="NP_061891.1"/>
</dbReference>
<dbReference type="UCSC" id="uc003jfj.4">
    <property type="organism name" value="human"/>
</dbReference>
<dbReference type="AGR" id="HGNC:25629"/>
<dbReference type="CTD" id="54491"/>
<dbReference type="DisGeNET" id="54491"/>
<dbReference type="GeneCards" id="OTULINL"/>
<dbReference type="HGNC" id="HGNC:25629">
    <property type="gene designation" value="OTULINL"/>
</dbReference>
<dbReference type="HPA" id="ENSG00000145569">
    <property type="expression patterns" value="Tissue enhanced (bone)"/>
</dbReference>
<dbReference type="neXtProt" id="NX_Q9NUU6"/>
<dbReference type="OpenTargets" id="ENSG00000145569"/>
<dbReference type="PharmGKB" id="PA142671788"/>
<dbReference type="VEuPathDB" id="HostDB:ENSG00000145569"/>
<dbReference type="eggNOG" id="ENOG502QVY0">
    <property type="taxonomic scope" value="Eukaryota"/>
</dbReference>
<dbReference type="GeneTree" id="ENSGT00390000009802"/>
<dbReference type="HOGENOM" id="CLU_051856_0_0_1"/>
<dbReference type="InParanoid" id="Q9NUU6"/>
<dbReference type="OMA" id="NDRHYHV"/>
<dbReference type="OrthoDB" id="5962728at2759"/>
<dbReference type="PAN-GO" id="Q9NUU6">
    <property type="GO annotations" value="0 GO annotations based on evolutionary models"/>
</dbReference>
<dbReference type="PhylomeDB" id="Q9NUU6"/>
<dbReference type="TreeFam" id="TF328709"/>
<dbReference type="PathwayCommons" id="Q9NUU6"/>
<dbReference type="SignaLink" id="Q9NUU6"/>
<dbReference type="BioGRID-ORCS" id="54491">
    <property type="hits" value="11 hits in 1149 CRISPR screens"/>
</dbReference>
<dbReference type="ChiTaRS" id="FAM105A">
    <property type="organism name" value="human"/>
</dbReference>
<dbReference type="GenomeRNAi" id="54491"/>
<dbReference type="Pharos" id="Q9NUU6">
    <property type="development level" value="Tbio"/>
</dbReference>
<dbReference type="PRO" id="PR:Q9NUU6"/>
<dbReference type="Proteomes" id="UP000005640">
    <property type="component" value="Chromosome 5"/>
</dbReference>
<dbReference type="RNAct" id="Q9NUU6">
    <property type="molecule type" value="protein"/>
</dbReference>
<dbReference type="Bgee" id="ENSG00000145569">
    <property type="expression patterns" value="Expressed in monocyte and 144 other cell types or tissues"/>
</dbReference>
<dbReference type="GO" id="GO:0005737">
    <property type="term" value="C:cytoplasm"/>
    <property type="evidence" value="ECO:0000314"/>
    <property type="project" value="UniProtKB"/>
</dbReference>
<dbReference type="GO" id="GO:0098554">
    <property type="term" value="C:cytoplasmic side of endoplasmic reticulum membrane"/>
    <property type="evidence" value="ECO:0000314"/>
    <property type="project" value="UniProtKB"/>
</dbReference>
<dbReference type="GO" id="GO:0005635">
    <property type="term" value="C:nuclear envelope"/>
    <property type="evidence" value="ECO:0007669"/>
    <property type="project" value="UniProtKB-SubCell"/>
</dbReference>
<dbReference type="CDD" id="cd22798">
    <property type="entry name" value="OTU_OTULL"/>
    <property type="match status" value="1"/>
</dbReference>
<dbReference type="InterPro" id="IPR023235">
    <property type="entry name" value="FAM105"/>
</dbReference>
<dbReference type="InterPro" id="IPR023236">
    <property type="entry name" value="OTULINL"/>
</dbReference>
<dbReference type="PANTHER" id="PTHR33662:SF1">
    <property type="entry name" value="INACTIVE UBIQUITIN THIOESTERASE OTULINL"/>
    <property type="match status" value="1"/>
</dbReference>
<dbReference type="PANTHER" id="PTHR33662">
    <property type="entry name" value="OTU DEUBIQUITINASE WITH LINEAR LINKAGE-SPECIFICITY A-RELATED"/>
    <property type="match status" value="1"/>
</dbReference>
<dbReference type="Pfam" id="PF16218">
    <property type="entry name" value="Peptidase_C101"/>
    <property type="match status" value="1"/>
</dbReference>
<dbReference type="PRINTS" id="PR02055">
    <property type="entry name" value="PROTEINF105"/>
</dbReference>
<dbReference type="PRINTS" id="PR02056">
    <property type="entry name" value="PROTEINF105A"/>
</dbReference>
<protein>
    <recommendedName>
        <fullName>Inactive ubiquitin thioesterase OTULINL</fullName>
    </recommendedName>
</protein>
<comment type="function">
    <text evidence="3">Lacks deubiquitinase activity.</text>
</comment>
<comment type="subunit">
    <text evidence="3">Does not bind ubiquitin or ubiquitin-like proteins.</text>
</comment>
<comment type="interaction">
    <interactant intactId="EBI-6916492">
        <id>Q9NUU6</id>
    </interactant>
    <interactant intactId="EBI-13059134">
        <id>Q13520</id>
        <label>AQP6</label>
    </interactant>
    <organismsDiffer>false</organismsDiffer>
    <experiments>3</experiments>
</comment>
<comment type="interaction">
    <interactant intactId="EBI-6916492">
        <id>Q9NUU6</id>
    </interactant>
    <interactant intactId="EBI-17231387">
        <id>Q6ZVE7</id>
        <label>GOLT1A</label>
    </interactant>
    <organismsDiffer>false</organismsDiffer>
    <experiments>3</experiments>
</comment>
<comment type="interaction">
    <interactant intactId="EBI-6916492">
        <id>Q9NUU6</id>
    </interactant>
    <interactant intactId="EBI-1052304">
        <id>Q8NBQ5</id>
        <label>HSD17B11</label>
    </interactant>
    <organismsDiffer>false</organismsDiffer>
    <experiments>3</experiments>
</comment>
<comment type="interaction">
    <interactant intactId="EBI-6916492">
        <id>Q9NUU6</id>
    </interactant>
    <interactant intactId="EBI-517086">
        <id>O43464</id>
        <label>HTRA2</label>
    </interactant>
    <organismsDiffer>false</organismsDiffer>
    <experiments>3</experiments>
</comment>
<comment type="interaction">
    <interactant intactId="EBI-6916492">
        <id>Q9NUU6</id>
    </interactant>
    <interactant intactId="EBI-10266796">
        <id>Q8N5M9</id>
        <label>JAGN1</label>
    </interactant>
    <organismsDiffer>false</organismsDiffer>
    <experiments>3</experiments>
</comment>
<comment type="interaction">
    <interactant intactId="EBI-6916492">
        <id>Q9NUU6</id>
    </interactant>
    <interactant intactId="EBI-948266">
        <id>O14901</id>
        <label>KLF11</label>
    </interactant>
    <organismsDiffer>false</organismsDiffer>
    <experiments>3</experiments>
</comment>
<comment type="interaction">
    <interactant intactId="EBI-6916492">
        <id>Q9NUU6</id>
    </interactant>
    <interactant intactId="EBI-10192441">
        <id>Q86VR2</id>
        <label>RETREG3</label>
    </interactant>
    <organismsDiffer>false</organismsDiffer>
    <experiments>3</experiments>
</comment>
<comment type="interaction">
    <interactant intactId="EBI-6916492">
        <id>Q9NUU6</id>
    </interactant>
    <interactant intactId="EBI-10262251">
        <id>Q8IWU4</id>
        <label>SLC30A8</label>
    </interactant>
    <organismsDiffer>false</organismsDiffer>
    <experiments>3</experiments>
</comment>
<comment type="interaction">
    <interactant intactId="EBI-6916492">
        <id>Q9NUU6</id>
    </interactant>
    <interactant intactId="EBI-8638294">
        <id>Q9NUH8</id>
        <label>TMEM14B</label>
    </interactant>
    <organismsDiffer>false</organismsDiffer>
    <experiments>3</experiments>
</comment>
<comment type="interaction">
    <interactant intactId="EBI-6916492">
        <id>Q9NUU6</id>
    </interactant>
    <interactant intactId="EBI-2548832">
        <id>Q8N661</id>
        <label>TMEM86B</label>
    </interactant>
    <organismsDiffer>false</organismsDiffer>
    <experiments>3</experiments>
</comment>
<comment type="interaction">
    <interactant intactId="EBI-6916492">
        <id>Q9NUU6</id>
    </interactant>
    <interactant intactId="EBI-6447886">
        <id>Q9Y320</id>
        <label>TMX2</label>
    </interactant>
    <organismsDiffer>false</organismsDiffer>
    <experiments>3</experiments>
</comment>
<comment type="subcellular location">
    <subcellularLocation>
        <location evidence="3">Cytoplasm</location>
    </subcellularLocation>
    <subcellularLocation>
        <location evidence="3">Endoplasmic reticulum membrane</location>
        <topology evidence="3">Peripheral membrane protein</topology>
    </subcellularLocation>
    <subcellularLocation>
        <location evidence="3">Nucleus envelope</location>
    </subcellularLocation>
</comment>
<comment type="domain">
    <text evidence="3">The N-terminal region that precedes the OTU domain mediates interaction with cellular membranes.</text>
</comment>
<comment type="similarity">
    <text evidence="5">Belongs to the peptidase C65 family. Otulin subfamily.</text>
</comment>
<comment type="caution">
    <text evidence="3 6">Although highly similar to the deubiquitinase OTULIN, lacks the conserved active site Cys at position 139 which is replaced by an Asp residue, and does not show deubiquitinase activity.</text>
</comment>
<gene>
    <name evidence="4 7" type="primary">OTULINL</name>
    <name evidence="4 7" type="synonym">FAM105A</name>
</gene>
<proteinExistence type="evidence at protein level"/>
<sequence>MAATRSPTRARERERSGAPAAGSDQVHSWMLATSQALDTVWRMAKGFVMLAVSFLVAAICYFRRLHLYSGHKLKWWIGYLQRKFKRNLSVEAEVDLLSYCAREWKGETPRNKLMRKAYEELFWRHHIKCVRQVRRDNYDALRSVLFQIFSQGISFPSWMKEKDIVKLPEKLLFSQGCNWIQQYSFGPEKYTGSNVFGKLRKYVELLKTQWTEFNGIRDYHKRGSMCNTLFSDAILEYKLYEALKFIMLYQVTEVYEQMKTKKVIPSLFRLLFSRETSSDPLSFMMNHLNSVGDTCGLEQIDMFILGYSLEVKIKVFRLFKFNSRDFEVCYPEEPLRDWPEISLLTENDRHYHIPVF</sequence>
<organism>
    <name type="scientific">Homo sapiens</name>
    <name type="common">Human</name>
    <dbReference type="NCBI Taxonomy" id="9606"/>
    <lineage>
        <taxon>Eukaryota</taxon>
        <taxon>Metazoa</taxon>
        <taxon>Chordata</taxon>
        <taxon>Craniata</taxon>
        <taxon>Vertebrata</taxon>
        <taxon>Euteleostomi</taxon>
        <taxon>Mammalia</taxon>
        <taxon>Eutheria</taxon>
        <taxon>Euarchontoglires</taxon>
        <taxon>Primates</taxon>
        <taxon>Haplorrhini</taxon>
        <taxon>Catarrhini</taxon>
        <taxon>Hominidae</taxon>
        <taxon>Homo</taxon>
    </lineage>
</organism>
<feature type="chain" id="PRO_0000274404" description="Inactive ubiquitin thioesterase OTULINL">
    <location>
        <begin position="1"/>
        <end position="356"/>
    </location>
</feature>
<feature type="domain" description="OTU" evidence="1">
    <location>
        <begin position="128"/>
        <end position="356"/>
    </location>
</feature>
<feature type="region of interest" description="Required for membrane binding" evidence="3">
    <location>
        <begin position="1"/>
        <end position="83"/>
    </location>
</feature>
<feature type="region of interest" description="Disordered" evidence="2">
    <location>
        <begin position="1"/>
        <end position="22"/>
    </location>
</feature>
<feature type="sequence variant" id="VAR_030281" description="In dbSNP:rs16903574.">
    <original>F</original>
    <variation>L</variation>
    <location>
        <position position="319"/>
    </location>
</feature>
<feature type="mutagenesis site" description="Loss of membrane binding." evidence="3">
    <location>
        <begin position="2"/>
        <end position="83"/>
    </location>
</feature>
<feature type="mutagenesis site" description="Fails to confer catalytic activity; when associated with N-352." evidence="3">
    <original>D</original>
    <variation>C</variation>
    <location>
        <position position="139"/>
    </location>
</feature>
<feature type="mutagenesis site" description="Fails to confer catalytic activity; when associated with C-139." evidence="3">
    <original>H</original>
    <variation>N</variation>
    <location>
        <position position="352"/>
    </location>
</feature>
<feature type="sequence conflict" description="In Ref. 2; BAD96451." evidence="5" ref="2">
    <original>N</original>
    <variation>I</variation>
    <location>
        <position position="322"/>
    </location>
</feature>
<feature type="helix" evidence="8">
    <location>
        <begin position="96"/>
        <end position="103"/>
    </location>
</feature>
<feature type="helix" evidence="8">
    <location>
        <begin position="109"/>
        <end position="125"/>
    </location>
</feature>
<feature type="strand" evidence="8">
    <location>
        <begin position="129"/>
        <end position="131"/>
    </location>
</feature>
<feature type="helix" evidence="8">
    <location>
        <begin position="139"/>
        <end position="151"/>
    </location>
</feature>
<feature type="helix" evidence="8">
    <location>
        <begin position="158"/>
        <end position="161"/>
    </location>
</feature>
<feature type="helix" evidence="8">
    <location>
        <begin position="164"/>
        <end position="166"/>
    </location>
</feature>
<feature type="helix" evidence="8">
    <location>
        <begin position="167"/>
        <end position="174"/>
    </location>
</feature>
<feature type="helix" evidence="8">
    <location>
        <begin position="177"/>
        <end position="180"/>
    </location>
</feature>
<feature type="helix" evidence="8">
    <location>
        <begin position="186"/>
        <end position="188"/>
    </location>
</feature>
<feature type="helix" evidence="8">
    <location>
        <begin position="195"/>
        <end position="214"/>
    </location>
</feature>
<feature type="helix" evidence="8">
    <location>
        <begin position="219"/>
        <end position="229"/>
    </location>
</feature>
<feature type="helix" evidence="8">
    <location>
        <begin position="233"/>
        <end position="259"/>
    </location>
</feature>
<feature type="helix" evidence="8">
    <location>
        <begin position="266"/>
        <end position="273"/>
    </location>
</feature>
<feature type="helix" evidence="8">
    <location>
        <begin position="275"/>
        <end position="277"/>
    </location>
</feature>
<feature type="helix" evidence="8">
    <location>
        <begin position="280"/>
        <end position="286"/>
    </location>
</feature>
<feature type="helix" evidence="8">
    <location>
        <begin position="288"/>
        <end position="290"/>
    </location>
</feature>
<feature type="turn" evidence="8">
    <location>
        <begin position="291"/>
        <end position="293"/>
    </location>
</feature>
<feature type="helix" evidence="8">
    <location>
        <begin position="299"/>
        <end position="309"/>
    </location>
</feature>
<feature type="strand" evidence="8">
    <location>
        <begin position="312"/>
        <end position="317"/>
    </location>
</feature>
<feature type="helix" evidence="8">
    <location>
        <begin position="318"/>
        <end position="320"/>
    </location>
</feature>
<feature type="helix" evidence="8">
    <location>
        <begin position="324"/>
        <end position="326"/>
    </location>
</feature>
<feature type="strand" evidence="8">
    <location>
        <begin position="327"/>
        <end position="331"/>
    </location>
</feature>
<feature type="helix" evidence="8">
    <location>
        <begin position="334"/>
        <end position="336"/>
    </location>
</feature>
<feature type="strand" evidence="8">
    <location>
        <begin position="340"/>
        <end position="349"/>
    </location>
</feature>
<feature type="strand" evidence="8">
    <location>
        <begin position="351"/>
        <end position="355"/>
    </location>
</feature>
<accession>Q9NUU6</accession>
<accession>Q53H50</accession>
<accession>Q9H037</accession>